<proteinExistence type="inferred from homology"/>
<name>IHFB_YERPN</name>
<organism>
    <name type="scientific">Yersinia pestis bv. Antiqua (strain Nepal516)</name>
    <dbReference type="NCBI Taxonomy" id="377628"/>
    <lineage>
        <taxon>Bacteria</taxon>
        <taxon>Pseudomonadati</taxon>
        <taxon>Pseudomonadota</taxon>
        <taxon>Gammaproteobacteria</taxon>
        <taxon>Enterobacterales</taxon>
        <taxon>Yersiniaceae</taxon>
        <taxon>Yersinia</taxon>
    </lineage>
</organism>
<keyword id="KW-0233">DNA recombination</keyword>
<keyword id="KW-0238">DNA-binding</keyword>
<keyword id="KW-0804">Transcription</keyword>
<keyword id="KW-0805">Transcription regulation</keyword>
<keyword id="KW-0810">Translation regulation</keyword>
<feature type="chain" id="PRO_1000060680" description="Integration host factor subunit beta">
    <location>
        <begin position="1"/>
        <end position="94"/>
    </location>
</feature>
<sequence>MTKSELIERLAGQQSHVPAKVVEDAVKEMLEHMAGTLAEGERIEIRGFGSFSLHYRAPRVGRNPKTGDKVELEGKYVPHFKPGKELRDRANIYG</sequence>
<gene>
    <name evidence="1" type="primary">ihfB</name>
    <name evidence="1" type="synonym">himD</name>
    <name type="ordered locus">YPN_2584</name>
    <name type="ORF">YP516_2911</name>
</gene>
<accession>Q1CGG8</accession>
<accession>C4GVS6</accession>
<dbReference type="EMBL" id="CP000305">
    <property type="protein sequence ID" value="ABG18912.1"/>
    <property type="molecule type" value="Genomic_DNA"/>
</dbReference>
<dbReference type="EMBL" id="ACNQ01000017">
    <property type="protein sequence ID" value="EEO75026.1"/>
    <property type="molecule type" value="Genomic_DNA"/>
</dbReference>
<dbReference type="RefSeq" id="WP_002211322.1">
    <property type="nucleotide sequence ID" value="NZ_ACNQ01000017.1"/>
</dbReference>
<dbReference type="SMR" id="Q1CGG8"/>
<dbReference type="GeneID" id="96664989"/>
<dbReference type="KEGG" id="ypn:YPN_2584"/>
<dbReference type="HOGENOM" id="CLU_105066_2_0_6"/>
<dbReference type="Proteomes" id="UP000008936">
    <property type="component" value="Chromosome"/>
</dbReference>
<dbReference type="GO" id="GO:0005694">
    <property type="term" value="C:chromosome"/>
    <property type="evidence" value="ECO:0007669"/>
    <property type="project" value="InterPro"/>
</dbReference>
<dbReference type="GO" id="GO:0005829">
    <property type="term" value="C:cytosol"/>
    <property type="evidence" value="ECO:0007669"/>
    <property type="project" value="TreeGrafter"/>
</dbReference>
<dbReference type="GO" id="GO:0003677">
    <property type="term" value="F:DNA binding"/>
    <property type="evidence" value="ECO:0007669"/>
    <property type="project" value="UniProtKB-UniRule"/>
</dbReference>
<dbReference type="GO" id="GO:0030527">
    <property type="term" value="F:structural constituent of chromatin"/>
    <property type="evidence" value="ECO:0007669"/>
    <property type="project" value="InterPro"/>
</dbReference>
<dbReference type="GO" id="GO:0006310">
    <property type="term" value="P:DNA recombination"/>
    <property type="evidence" value="ECO:0007669"/>
    <property type="project" value="UniProtKB-UniRule"/>
</dbReference>
<dbReference type="GO" id="GO:0006355">
    <property type="term" value="P:regulation of DNA-templated transcription"/>
    <property type="evidence" value="ECO:0007669"/>
    <property type="project" value="UniProtKB-UniRule"/>
</dbReference>
<dbReference type="GO" id="GO:0006417">
    <property type="term" value="P:regulation of translation"/>
    <property type="evidence" value="ECO:0007669"/>
    <property type="project" value="UniProtKB-UniRule"/>
</dbReference>
<dbReference type="CDD" id="cd13836">
    <property type="entry name" value="IHF_B"/>
    <property type="match status" value="1"/>
</dbReference>
<dbReference type="FunFam" id="4.10.520.10:FF:000003">
    <property type="entry name" value="Integration host factor subunit beta"/>
    <property type="match status" value="1"/>
</dbReference>
<dbReference type="Gene3D" id="4.10.520.10">
    <property type="entry name" value="IHF-like DNA-binding proteins"/>
    <property type="match status" value="1"/>
</dbReference>
<dbReference type="HAMAP" id="MF_00381">
    <property type="entry name" value="IHF_beta"/>
    <property type="match status" value="1"/>
</dbReference>
<dbReference type="InterPro" id="IPR000119">
    <property type="entry name" value="Hist_DNA-bd"/>
</dbReference>
<dbReference type="InterPro" id="IPR020816">
    <property type="entry name" value="Histone-like_DNA-bd_CS"/>
</dbReference>
<dbReference type="InterPro" id="IPR010992">
    <property type="entry name" value="IHF-like_DNA-bd_dom_sf"/>
</dbReference>
<dbReference type="InterPro" id="IPR005685">
    <property type="entry name" value="IHF_beta"/>
</dbReference>
<dbReference type="NCBIfam" id="TIGR00988">
    <property type="entry name" value="hip"/>
    <property type="match status" value="1"/>
</dbReference>
<dbReference type="NCBIfam" id="NF001222">
    <property type="entry name" value="PRK00199.1"/>
    <property type="match status" value="1"/>
</dbReference>
<dbReference type="PANTHER" id="PTHR33175">
    <property type="entry name" value="DNA-BINDING PROTEIN HU"/>
    <property type="match status" value="1"/>
</dbReference>
<dbReference type="PANTHER" id="PTHR33175:SF5">
    <property type="entry name" value="INTEGRATION HOST FACTOR SUBUNIT BETA"/>
    <property type="match status" value="1"/>
</dbReference>
<dbReference type="Pfam" id="PF00216">
    <property type="entry name" value="Bac_DNA_binding"/>
    <property type="match status" value="1"/>
</dbReference>
<dbReference type="PRINTS" id="PR01727">
    <property type="entry name" value="DNABINDINGHU"/>
</dbReference>
<dbReference type="SMART" id="SM00411">
    <property type="entry name" value="BHL"/>
    <property type="match status" value="1"/>
</dbReference>
<dbReference type="SUPFAM" id="SSF47729">
    <property type="entry name" value="IHF-like DNA-binding proteins"/>
    <property type="match status" value="1"/>
</dbReference>
<dbReference type="PROSITE" id="PS00045">
    <property type="entry name" value="HISTONE_LIKE"/>
    <property type="match status" value="1"/>
</dbReference>
<evidence type="ECO:0000255" key="1">
    <source>
        <dbReference type="HAMAP-Rule" id="MF_00381"/>
    </source>
</evidence>
<comment type="function">
    <text evidence="1">This protein is one of the two subunits of integration host factor, a specific DNA-binding protein that functions in genetic recombination as well as in transcriptional and translational control.</text>
</comment>
<comment type="subunit">
    <text evidence="1">Heterodimer of an alpha and a beta chain.</text>
</comment>
<comment type="similarity">
    <text evidence="1">Belongs to the bacterial histone-like protein family.</text>
</comment>
<protein>
    <recommendedName>
        <fullName evidence="1">Integration host factor subunit beta</fullName>
        <shortName evidence="1">IHF-beta</shortName>
    </recommendedName>
</protein>
<reference key="1">
    <citation type="journal article" date="2006" name="J. Bacteriol.">
        <title>Complete genome sequence of Yersinia pestis strains Antiqua and Nepal516: evidence of gene reduction in an emerging pathogen.</title>
        <authorList>
            <person name="Chain P.S.G."/>
            <person name="Hu P."/>
            <person name="Malfatti S.A."/>
            <person name="Radnedge L."/>
            <person name="Larimer F."/>
            <person name="Vergez L.M."/>
            <person name="Worsham P."/>
            <person name="Chu M.C."/>
            <person name="Andersen G.L."/>
        </authorList>
    </citation>
    <scope>NUCLEOTIDE SEQUENCE [LARGE SCALE GENOMIC DNA]</scope>
    <source>
        <strain>Nepal516</strain>
    </source>
</reference>
<reference key="2">
    <citation type="submission" date="2009-04" db="EMBL/GenBank/DDBJ databases">
        <title>Yersinia pestis Nepal516A whole genome shotgun sequencing project.</title>
        <authorList>
            <person name="Plunkett G. III"/>
            <person name="Anderson B.D."/>
            <person name="Baumler D.J."/>
            <person name="Burland V."/>
            <person name="Cabot E.L."/>
            <person name="Glasner J.D."/>
            <person name="Mau B."/>
            <person name="Neeno-Eckwall E."/>
            <person name="Perna N.T."/>
            <person name="Munk A.C."/>
            <person name="Tapia R."/>
            <person name="Green L.D."/>
            <person name="Rogers Y.C."/>
            <person name="Detter J.C."/>
            <person name="Bruce D.C."/>
            <person name="Brettin T.S."/>
        </authorList>
    </citation>
    <scope>NUCLEOTIDE SEQUENCE [LARGE SCALE GENOMIC DNA]</scope>
    <source>
        <strain>Nepal516</strain>
    </source>
</reference>